<accession>Q0SQZ1</accession>
<dbReference type="EMBL" id="CP000312">
    <property type="protein sequence ID" value="ABG86709.1"/>
    <property type="status" value="ALT_INIT"/>
    <property type="molecule type" value="Genomic_DNA"/>
</dbReference>
<dbReference type="RefSeq" id="WP_045009260.1">
    <property type="nucleotide sequence ID" value="NC_008262.1"/>
</dbReference>
<dbReference type="SMR" id="Q0SQZ1"/>
<dbReference type="KEGG" id="cpr:CPR_2166"/>
<dbReference type="Proteomes" id="UP000001824">
    <property type="component" value="Chromosome"/>
</dbReference>
<dbReference type="GO" id="GO:0005886">
    <property type="term" value="C:plasma membrane"/>
    <property type="evidence" value="ECO:0007669"/>
    <property type="project" value="UniProtKB-SubCell"/>
</dbReference>
<dbReference type="GO" id="GO:0045259">
    <property type="term" value="C:proton-transporting ATP synthase complex"/>
    <property type="evidence" value="ECO:0007669"/>
    <property type="project" value="UniProtKB-KW"/>
</dbReference>
<dbReference type="GO" id="GO:0046933">
    <property type="term" value="F:proton-transporting ATP synthase activity, rotational mechanism"/>
    <property type="evidence" value="ECO:0007669"/>
    <property type="project" value="UniProtKB-UniRule"/>
</dbReference>
<dbReference type="GO" id="GO:0046961">
    <property type="term" value="F:proton-transporting ATPase activity, rotational mechanism"/>
    <property type="evidence" value="ECO:0007669"/>
    <property type="project" value="TreeGrafter"/>
</dbReference>
<dbReference type="CDD" id="cd06503">
    <property type="entry name" value="ATP-synt_Fo_b"/>
    <property type="match status" value="1"/>
</dbReference>
<dbReference type="HAMAP" id="MF_01398">
    <property type="entry name" value="ATP_synth_b_bprime"/>
    <property type="match status" value="1"/>
</dbReference>
<dbReference type="InterPro" id="IPR028987">
    <property type="entry name" value="ATP_synth_B-like_membr_sf"/>
</dbReference>
<dbReference type="InterPro" id="IPR002146">
    <property type="entry name" value="ATP_synth_b/b'su_bac/chlpt"/>
</dbReference>
<dbReference type="InterPro" id="IPR005864">
    <property type="entry name" value="ATP_synth_F0_bsu_bac"/>
</dbReference>
<dbReference type="InterPro" id="IPR050059">
    <property type="entry name" value="ATP_synthase_B_chain"/>
</dbReference>
<dbReference type="NCBIfam" id="TIGR01144">
    <property type="entry name" value="ATP_synt_b"/>
    <property type="match status" value="1"/>
</dbReference>
<dbReference type="NCBIfam" id="NF009992">
    <property type="entry name" value="PRK13461.1"/>
    <property type="match status" value="1"/>
</dbReference>
<dbReference type="PANTHER" id="PTHR33445:SF1">
    <property type="entry name" value="ATP SYNTHASE SUBUNIT B"/>
    <property type="match status" value="1"/>
</dbReference>
<dbReference type="PANTHER" id="PTHR33445">
    <property type="entry name" value="ATP SYNTHASE SUBUNIT B', CHLOROPLASTIC"/>
    <property type="match status" value="1"/>
</dbReference>
<dbReference type="Pfam" id="PF00430">
    <property type="entry name" value="ATP-synt_B"/>
    <property type="match status" value="1"/>
</dbReference>
<dbReference type="SUPFAM" id="SSF81573">
    <property type="entry name" value="F1F0 ATP synthase subunit B, membrane domain"/>
    <property type="match status" value="1"/>
</dbReference>
<proteinExistence type="inferred from homology"/>
<comment type="function">
    <text evidence="1">F(1)F(0) ATP synthase produces ATP from ADP in the presence of a proton or sodium gradient. F-type ATPases consist of two structural domains, F(1) containing the extramembraneous catalytic core and F(0) containing the membrane proton channel, linked together by a central stalk and a peripheral stalk. During catalysis, ATP synthesis in the catalytic domain of F(1) is coupled via a rotary mechanism of the central stalk subunits to proton translocation.</text>
</comment>
<comment type="function">
    <text evidence="1">Component of the F(0) channel, it forms part of the peripheral stalk, linking F(1) to F(0).</text>
</comment>
<comment type="subunit">
    <text evidence="1">F-type ATPases have 2 components, F(1) - the catalytic core - and F(0) - the membrane proton channel. F(1) has five subunits: alpha(3), beta(3), gamma(1), delta(1), epsilon(1). F(0) has three main subunits: a(1), b(2) and c(10-14). The alpha and beta chains form an alternating ring which encloses part of the gamma chain. F(1) is attached to F(0) by a central stalk formed by the gamma and epsilon chains, while a peripheral stalk is formed by the delta and b chains.</text>
</comment>
<comment type="subcellular location">
    <subcellularLocation>
        <location evidence="1">Cell membrane</location>
        <topology evidence="1">Single-pass membrane protein</topology>
    </subcellularLocation>
</comment>
<comment type="similarity">
    <text evidence="1">Belongs to the ATPase B chain family.</text>
</comment>
<comment type="sequence caution" evidence="2">
    <conflict type="erroneous initiation">
        <sequence resource="EMBL-CDS" id="ABG86709"/>
    </conflict>
</comment>
<keyword id="KW-0066">ATP synthesis</keyword>
<keyword id="KW-1003">Cell membrane</keyword>
<keyword id="KW-0138">CF(0)</keyword>
<keyword id="KW-0375">Hydrogen ion transport</keyword>
<keyword id="KW-0406">Ion transport</keyword>
<keyword id="KW-0472">Membrane</keyword>
<keyword id="KW-0812">Transmembrane</keyword>
<keyword id="KW-1133">Transmembrane helix</keyword>
<keyword id="KW-0813">Transport</keyword>
<gene>
    <name evidence="1" type="primary">atpF</name>
    <name type="ordered locus">CPR_2166</name>
</gene>
<evidence type="ECO:0000255" key="1">
    <source>
        <dbReference type="HAMAP-Rule" id="MF_01398"/>
    </source>
</evidence>
<evidence type="ECO:0000305" key="2"/>
<feature type="chain" id="PRO_0000368432" description="ATP synthase subunit b">
    <location>
        <begin position="1"/>
        <end position="159"/>
    </location>
</feature>
<feature type="transmembrane region" description="Helical" evidence="1">
    <location>
        <begin position="8"/>
        <end position="28"/>
    </location>
</feature>
<sequence length="159" mass="18830">MELNFMRILATIINFIILILILKHFFWDKIKRAIDARQEAIDETILKADEDAEKARRLRLDNERILKSAKEDGRKLREEQKKEADRIYKEIVDDAHREAESIINRANIEIQREEEKVKYELKQQVVDISVMLSEKALGESIDESKHRELINDFIEKVGI</sequence>
<protein>
    <recommendedName>
        <fullName evidence="1">ATP synthase subunit b</fullName>
    </recommendedName>
    <alternativeName>
        <fullName evidence="1">ATP synthase F(0) sector subunit b</fullName>
    </alternativeName>
    <alternativeName>
        <fullName evidence="1">ATPase subunit I</fullName>
    </alternativeName>
    <alternativeName>
        <fullName evidence="1">F-type ATPase subunit b</fullName>
        <shortName evidence="1">F-ATPase subunit b</shortName>
    </alternativeName>
</protein>
<reference key="1">
    <citation type="journal article" date="2006" name="Genome Res.">
        <title>Skewed genomic variability in strains of the toxigenic bacterial pathogen, Clostridium perfringens.</title>
        <authorList>
            <person name="Myers G.S.A."/>
            <person name="Rasko D.A."/>
            <person name="Cheung J.K."/>
            <person name="Ravel J."/>
            <person name="Seshadri R."/>
            <person name="DeBoy R.T."/>
            <person name="Ren Q."/>
            <person name="Varga J."/>
            <person name="Awad M.M."/>
            <person name="Brinkac L.M."/>
            <person name="Daugherty S.C."/>
            <person name="Haft D.H."/>
            <person name="Dodson R.J."/>
            <person name="Madupu R."/>
            <person name="Nelson W.C."/>
            <person name="Rosovitz M.J."/>
            <person name="Sullivan S.A."/>
            <person name="Khouri H."/>
            <person name="Dimitrov G.I."/>
            <person name="Watkins K.L."/>
            <person name="Mulligan S."/>
            <person name="Benton J."/>
            <person name="Radune D."/>
            <person name="Fisher D.J."/>
            <person name="Atkins H.S."/>
            <person name="Hiscox T."/>
            <person name="Jost B.H."/>
            <person name="Billington S.J."/>
            <person name="Songer J.G."/>
            <person name="McClane B.A."/>
            <person name="Titball R.W."/>
            <person name="Rood J.I."/>
            <person name="Melville S.B."/>
            <person name="Paulsen I.T."/>
        </authorList>
    </citation>
    <scope>NUCLEOTIDE SEQUENCE [LARGE SCALE GENOMIC DNA]</scope>
    <source>
        <strain>SM101 / Type A</strain>
    </source>
</reference>
<name>ATPF_CLOPS</name>
<organism>
    <name type="scientific">Clostridium perfringens (strain SM101 / Type A)</name>
    <dbReference type="NCBI Taxonomy" id="289380"/>
    <lineage>
        <taxon>Bacteria</taxon>
        <taxon>Bacillati</taxon>
        <taxon>Bacillota</taxon>
        <taxon>Clostridia</taxon>
        <taxon>Eubacteriales</taxon>
        <taxon>Clostridiaceae</taxon>
        <taxon>Clostridium</taxon>
    </lineage>
</organism>